<evidence type="ECO:0000255" key="1">
    <source>
        <dbReference type="HAMAP-Rule" id="MF_00537"/>
    </source>
</evidence>
<evidence type="ECO:0000305" key="2"/>
<reference key="1">
    <citation type="journal article" date="2007" name="PLoS Genet.">
        <title>Patterns and implications of gene gain and loss in the evolution of Prochlorococcus.</title>
        <authorList>
            <person name="Kettler G.C."/>
            <person name="Martiny A.C."/>
            <person name="Huang K."/>
            <person name="Zucker J."/>
            <person name="Coleman M.L."/>
            <person name="Rodrigue S."/>
            <person name="Chen F."/>
            <person name="Lapidus A."/>
            <person name="Ferriera S."/>
            <person name="Johnson J."/>
            <person name="Steglich C."/>
            <person name="Church G.M."/>
            <person name="Richardson P."/>
            <person name="Chisholm S.W."/>
        </authorList>
    </citation>
    <scope>NUCLEOTIDE SEQUENCE [LARGE SCALE GENOMIC DNA]</scope>
    <source>
        <strain>AS9601</strain>
    </source>
</reference>
<proteinExistence type="inferred from homology"/>
<name>RS14_PROMS</name>
<protein>
    <recommendedName>
        <fullName evidence="1">Small ribosomal subunit protein uS14</fullName>
    </recommendedName>
    <alternativeName>
        <fullName evidence="2">30S ribosomal protein S14</fullName>
    </alternativeName>
</protein>
<gene>
    <name evidence="1" type="primary">rpsN</name>
    <name evidence="1" type="synonym">rps14</name>
    <name type="ordered locus">A9601_13831</name>
</gene>
<comment type="function">
    <text evidence="1">Binds 16S rRNA, required for the assembly of 30S particles and may also be responsible for determining the conformation of the 16S rRNA at the A site.</text>
</comment>
<comment type="subunit">
    <text evidence="1">Part of the 30S ribosomal subunit. Contacts proteins S3 and S10.</text>
</comment>
<comment type="similarity">
    <text evidence="1">Belongs to the universal ribosomal protein uS14 family.</text>
</comment>
<sequence>MAKKSMIAREVKRKKLVKKYSAKRKALLDEFNAAKDPMERLEIHRKIQGLPRNSAPNRVRNRCWATGKPRGVYRDFGLCRNQLRQRAHNGELPGVVKSSW</sequence>
<accession>A2BSA6</accession>
<keyword id="KW-0687">Ribonucleoprotein</keyword>
<keyword id="KW-0689">Ribosomal protein</keyword>
<keyword id="KW-0694">RNA-binding</keyword>
<keyword id="KW-0699">rRNA-binding</keyword>
<organism>
    <name type="scientific">Prochlorococcus marinus (strain AS9601)</name>
    <dbReference type="NCBI Taxonomy" id="146891"/>
    <lineage>
        <taxon>Bacteria</taxon>
        <taxon>Bacillati</taxon>
        <taxon>Cyanobacteriota</taxon>
        <taxon>Cyanophyceae</taxon>
        <taxon>Synechococcales</taxon>
        <taxon>Prochlorococcaceae</taxon>
        <taxon>Prochlorococcus</taxon>
    </lineage>
</organism>
<dbReference type="EMBL" id="CP000551">
    <property type="protein sequence ID" value="ABM70667.1"/>
    <property type="molecule type" value="Genomic_DNA"/>
</dbReference>
<dbReference type="RefSeq" id="WP_011818804.1">
    <property type="nucleotide sequence ID" value="NC_008816.1"/>
</dbReference>
<dbReference type="SMR" id="A2BSA6"/>
<dbReference type="STRING" id="146891.A9601_13831"/>
<dbReference type="KEGG" id="pmb:A9601_13831"/>
<dbReference type="eggNOG" id="COG0199">
    <property type="taxonomic scope" value="Bacteria"/>
</dbReference>
<dbReference type="HOGENOM" id="CLU_139869_0_1_3"/>
<dbReference type="OrthoDB" id="9810484at2"/>
<dbReference type="Proteomes" id="UP000002590">
    <property type="component" value="Chromosome"/>
</dbReference>
<dbReference type="GO" id="GO:0005737">
    <property type="term" value="C:cytoplasm"/>
    <property type="evidence" value="ECO:0007669"/>
    <property type="project" value="UniProtKB-ARBA"/>
</dbReference>
<dbReference type="GO" id="GO:0015935">
    <property type="term" value="C:small ribosomal subunit"/>
    <property type="evidence" value="ECO:0007669"/>
    <property type="project" value="TreeGrafter"/>
</dbReference>
<dbReference type="GO" id="GO:0019843">
    <property type="term" value="F:rRNA binding"/>
    <property type="evidence" value="ECO:0007669"/>
    <property type="project" value="UniProtKB-UniRule"/>
</dbReference>
<dbReference type="GO" id="GO:0003735">
    <property type="term" value="F:structural constituent of ribosome"/>
    <property type="evidence" value="ECO:0007669"/>
    <property type="project" value="InterPro"/>
</dbReference>
<dbReference type="GO" id="GO:0006412">
    <property type="term" value="P:translation"/>
    <property type="evidence" value="ECO:0007669"/>
    <property type="project" value="UniProtKB-UniRule"/>
</dbReference>
<dbReference type="FunFam" id="1.10.287.1480:FF:000001">
    <property type="entry name" value="30S ribosomal protein S14"/>
    <property type="match status" value="1"/>
</dbReference>
<dbReference type="Gene3D" id="1.10.287.1480">
    <property type="match status" value="1"/>
</dbReference>
<dbReference type="HAMAP" id="MF_00537">
    <property type="entry name" value="Ribosomal_uS14_1"/>
    <property type="match status" value="1"/>
</dbReference>
<dbReference type="InterPro" id="IPR001209">
    <property type="entry name" value="Ribosomal_uS14"/>
</dbReference>
<dbReference type="InterPro" id="IPR023036">
    <property type="entry name" value="Ribosomal_uS14_bac/plastid"/>
</dbReference>
<dbReference type="InterPro" id="IPR018271">
    <property type="entry name" value="Ribosomal_uS14_CS"/>
</dbReference>
<dbReference type="NCBIfam" id="NF006477">
    <property type="entry name" value="PRK08881.1"/>
    <property type="match status" value="1"/>
</dbReference>
<dbReference type="PANTHER" id="PTHR19836">
    <property type="entry name" value="30S RIBOSOMAL PROTEIN S14"/>
    <property type="match status" value="1"/>
</dbReference>
<dbReference type="PANTHER" id="PTHR19836:SF19">
    <property type="entry name" value="SMALL RIBOSOMAL SUBUNIT PROTEIN US14M"/>
    <property type="match status" value="1"/>
</dbReference>
<dbReference type="Pfam" id="PF00253">
    <property type="entry name" value="Ribosomal_S14"/>
    <property type="match status" value="1"/>
</dbReference>
<dbReference type="SUPFAM" id="SSF57716">
    <property type="entry name" value="Glucocorticoid receptor-like (DNA-binding domain)"/>
    <property type="match status" value="1"/>
</dbReference>
<dbReference type="PROSITE" id="PS00527">
    <property type="entry name" value="RIBOSOMAL_S14"/>
    <property type="match status" value="1"/>
</dbReference>
<feature type="chain" id="PRO_1000128506" description="Small ribosomal subunit protein uS14">
    <location>
        <begin position="1"/>
        <end position="100"/>
    </location>
</feature>